<sequence>MDKLVIEGGYPLSGEVVVSGAKNAALPILCASLLSAEPVHLENVPDLQDVRTMLKLLGQMGVQIESGDGRVSLNASKVDNLVAPYEMVKTMRASILVLGPLVARFGHARVSLPGGCAIGARPVDQHIKGLQAMGAEITIEHGFIEARAKRLKGARIVTDMITVTGTENLLMAAVLAEGETVIENAAREPEVGDLAHLLVAMGAKIEGIGTDRLVIQGVDKLHGAKHTVIPDRIEAGTFLCAVAAAGGDVTLRKVRPLILEAVTEKLREAGVTVEEGDDWMRVRMDKRPSAVTFRTSEYPAFPTDMQAQFMALNTIATGTSQVVETIFENRFMHVQELNRLGANITIDGNTALVTGVEQLSGAKVMATDLRASASLVIAALRADGETLIDRIYHLDRGYDRMETKLTALGAKVRRVSGSQA</sequence>
<keyword id="KW-0131">Cell cycle</keyword>
<keyword id="KW-0132">Cell division</keyword>
<keyword id="KW-0133">Cell shape</keyword>
<keyword id="KW-0961">Cell wall biogenesis/degradation</keyword>
<keyword id="KW-0963">Cytoplasm</keyword>
<keyword id="KW-0573">Peptidoglycan synthesis</keyword>
<keyword id="KW-0670">Pyruvate</keyword>
<keyword id="KW-0808">Transferase</keyword>
<reference key="1">
    <citation type="journal article" date="2011" name="J. Bacteriol.">
        <title>Complete genome sequence of the plant growth-promoting endophyte Burkholderia phytofirmans strain PsJN.</title>
        <authorList>
            <person name="Weilharter A."/>
            <person name="Mitter B."/>
            <person name="Shin M.V."/>
            <person name="Chain P.S."/>
            <person name="Nowak J."/>
            <person name="Sessitsch A."/>
        </authorList>
    </citation>
    <scope>NUCLEOTIDE SEQUENCE [LARGE SCALE GENOMIC DNA]</scope>
    <source>
        <strain>DSM 17436 / LMG 22146 / PsJN</strain>
    </source>
</reference>
<organism>
    <name type="scientific">Paraburkholderia phytofirmans (strain DSM 17436 / LMG 22146 / PsJN)</name>
    <name type="common">Burkholderia phytofirmans</name>
    <dbReference type="NCBI Taxonomy" id="398527"/>
    <lineage>
        <taxon>Bacteria</taxon>
        <taxon>Pseudomonadati</taxon>
        <taxon>Pseudomonadota</taxon>
        <taxon>Betaproteobacteria</taxon>
        <taxon>Burkholderiales</taxon>
        <taxon>Burkholderiaceae</taxon>
        <taxon>Paraburkholderia</taxon>
    </lineage>
</organism>
<name>MURA_PARPJ</name>
<protein>
    <recommendedName>
        <fullName evidence="1">UDP-N-acetylglucosamine 1-carboxyvinyltransferase</fullName>
        <ecNumber evidence="1">2.5.1.7</ecNumber>
    </recommendedName>
    <alternativeName>
        <fullName evidence="1">Enoylpyruvate transferase</fullName>
    </alternativeName>
    <alternativeName>
        <fullName evidence="1">UDP-N-acetylglucosamine enolpyruvyl transferase</fullName>
        <shortName evidence="1">EPT</shortName>
    </alternativeName>
</protein>
<feature type="chain" id="PRO_1000094676" description="UDP-N-acetylglucosamine 1-carboxyvinyltransferase">
    <location>
        <begin position="1"/>
        <end position="420"/>
    </location>
</feature>
<feature type="active site" description="Proton donor" evidence="1">
    <location>
        <position position="116"/>
    </location>
</feature>
<feature type="binding site" evidence="1">
    <location>
        <begin position="22"/>
        <end position="23"/>
    </location>
    <ligand>
        <name>phosphoenolpyruvate</name>
        <dbReference type="ChEBI" id="CHEBI:58702"/>
    </ligand>
</feature>
<feature type="binding site" evidence="1">
    <location>
        <position position="92"/>
    </location>
    <ligand>
        <name>UDP-N-acetyl-alpha-D-glucosamine</name>
        <dbReference type="ChEBI" id="CHEBI:57705"/>
    </ligand>
</feature>
<feature type="binding site" evidence="1">
    <location>
        <begin position="121"/>
        <end position="125"/>
    </location>
    <ligand>
        <name>UDP-N-acetyl-alpha-D-glucosamine</name>
        <dbReference type="ChEBI" id="CHEBI:57705"/>
    </ligand>
</feature>
<feature type="binding site" evidence="1">
    <location>
        <position position="304"/>
    </location>
    <ligand>
        <name>UDP-N-acetyl-alpha-D-glucosamine</name>
        <dbReference type="ChEBI" id="CHEBI:57705"/>
    </ligand>
</feature>
<feature type="binding site" evidence="1">
    <location>
        <position position="326"/>
    </location>
    <ligand>
        <name>UDP-N-acetyl-alpha-D-glucosamine</name>
        <dbReference type="ChEBI" id="CHEBI:57705"/>
    </ligand>
</feature>
<feature type="modified residue" description="2-(S-cysteinyl)pyruvic acid O-phosphothioketal" evidence="1">
    <location>
        <position position="116"/>
    </location>
</feature>
<evidence type="ECO:0000255" key="1">
    <source>
        <dbReference type="HAMAP-Rule" id="MF_00111"/>
    </source>
</evidence>
<dbReference type="EC" id="2.5.1.7" evidence="1"/>
<dbReference type="EMBL" id="CP001052">
    <property type="protein sequence ID" value="ACD17952.1"/>
    <property type="molecule type" value="Genomic_DNA"/>
</dbReference>
<dbReference type="RefSeq" id="WP_012434511.1">
    <property type="nucleotide sequence ID" value="NC_010681.1"/>
</dbReference>
<dbReference type="SMR" id="B2SZ71"/>
<dbReference type="STRING" id="398527.Bphyt_3562"/>
<dbReference type="KEGG" id="bpy:Bphyt_3562"/>
<dbReference type="eggNOG" id="COG0766">
    <property type="taxonomic scope" value="Bacteria"/>
</dbReference>
<dbReference type="HOGENOM" id="CLU_027387_0_0_4"/>
<dbReference type="OrthoDB" id="9803760at2"/>
<dbReference type="UniPathway" id="UPA00219"/>
<dbReference type="Proteomes" id="UP000001739">
    <property type="component" value="Chromosome 1"/>
</dbReference>
<dbReference type="GO" id="GO:0005737">
    <property type="term" value="C:cytoplasm"/>
    <property type="evidence" value="ECO:0007669"/>
    <property type="project" value="UniProtKB-SubCell"/>
</dbReference>
<dbReference type="GO" id="GO:0008760">
    <property type="term" value="F:UDP-N-acetylglucosamine 1-carboxyvinyltransferase activity"/>
    <property type="evidence" value="ECO:0007669"/>
    <property type="project" value="UniProtKB-UniRule"/>
</dbReference>
<dbReference type="GO" id="GO:0051301">
    <property type="term" value="P:cell division"/>
    <property type="evidence" value="ECO:0007669"/>
    <property type="project" value="UniProtKB-KW"/>
</dbReference>
<dbReference type="GO" id="GO:0071555">
    <property type="term" value="P:cell wall organization"/>
    <property type="evidence" value="ECO:0007669"/>
    <property type="project" value="UniProtKB-KW"/>
</dbReference>
<dbReference type="GO" id="GO:0009252">
    <property type="term" value="P:peptidoglycan biosynthetic process"/>
    <property type="evidence" value="ECO:0007669"/>
    <property type="project" value="UniProtKB-UniRule"/>
</dbReference>
<dbReference type="GO" id="GO:0008360">
    <property type="term" value="P:regulation of cell shape"/>
    <property type="evidence" value="ECO:0007669"/>
    <property type="project" value="UniProtKB-KW"/>
</dbReference>
<dbReference type="GO" id="GO:0019277">
    <property type="term" value="P:UDP-N-acetylgalactosamine biosynthetic process"/>
    <property type="evidence" value="ECO:0007669"/>
    <property type="project" value="InterPro"/>
</dbReference>
<dbReference type="CDD" id="cd01555">
    <property type="entry name" value="UdpNAET"/>
    <property type="match status" value="1"/>
</dbReference>
<dbReference type="FunFam" id="3.65.10.10:FF:000001">
    <property type="entry name" value="UDP-N-acetylglucosamine 1-carboxyvinyltransferase"/>
    <property type="match status" value="1"/>
</dbReference>
<dbReference type="Gene3D" id="3.65.10.10">
    <property type="entry name" value="Enolpyruvate transferase domain"/>
    <property type="match status" value="2"/>
</dbReference>
<dbReference type="HAMAP" id="MF_00111">
    <property type="entry name" value="MurA"/>
    <property type="match status" value="1"/>
</dbReference>
<dbReference type="InterPro" id="IPR001986">
    <property type="entry name" value="Enolpyruvate_Tfrase_dom"/>
</dbReference>
<dbReference type="InterPro" id="IPR036968">
    <property type="entry name" value="Enolpyruvate_Tfrase_sf"/>
</dbReference>
<dbReference type="InterPro" id="IPR050068">
    <property type="entry name" value="MurA_subfamily"/>
</dbReference>
<dbReference type="InterPro" id="IPR013792">
    <property type="entry name" value="RNA3'P_cycl/enolpyr_Trfase_a/b"/>
</dbReference>
<dbReference type="InterPro" id="IPR005750">
    <property type="entry name" value="UDP_GlcNAc_COvinyl_MurA"/>
</dbReference>
<dbReference type="NCBIfam" id="TIGR01072">
    <property type="entry name" value="murA"/>
    <property type="match status" value="1"/>
</dbReference>
<dbReference type="NCBIfam" id="NF006873">
    <property type="entry name" value="PRK09369.1"/>
    <property type="match status" value="1"/>
</dbReference>
<dbReference type="PANTHER" id="PTHR43783">
    <property type="entry name" value="UDP-N-ACETYLGLUCOSAMINE 1-CARBOXYVINYLTRANSFERASE"/>
    <property type="match status" value="1"/>
</dbReference>
<dbReference type="PANTHER" id="PTHR43783:SF1">
    <property type="entry name" value="UDP-N-ACETYLGLUCOSAMINE 1-CARBOXYVINYLTRANSFERASE"/>
    <property type="match status" value="1"/>
</dbReference>
<dbReference type="Pfam" id="PF00275">
    <property type="entry name" value="EPSP_synthase"/>
    <property type="match status" value="1"/>
</dbReference>
<dbReference type="SUPFAM" id="SSF55205">
    <property type="entry name" value="EPT/RTPC-like"/>
    <property type="match status" value="1"/>
</dbReference>
<accession>B2SZ71</accession>
<proteinExistence type="inferred from homology"/>
<gene>
    <name evidence="1" type="primary">murA</name>
    <name type="ordered locus">Bphyt_3562</name>
</gene>
<comment type="function">
    <text evidence="1">Cell wall formation. Adds enolpyruvyl to UDP-N-acetylglucosamine.</text>
</comment>
<comment type="catalytic activity">
    <reaction evidence="1">
        <text>phosphoenolpyruvate + UDP-N-acetyl-alpha-D-glucosamine = UDP-N-acetyl-3-O-(1-carboxyvinyl)-alpha-D-glucosamine + phosphate</text>
        <dbReference type="Rhea" id="RHEA:18681"/>
        <dbReference type="ChEBI" id="CHEBI:43474"/>
        <dbReference type="ChEBI" id="CHEBI:57705"/>
        <dbReference type="ChEBI" id="CHEBI:58702"/>
        <dbReference type="ChEBI" id="CHEBI:68483"/>
        <dbReference type="EC" id="2.5.1.7"/>
    </reaction>
</comment>
<comment type="pathway">
    <text evidence="1">Cell wall biogenesis; peptidoglycan biosynthesis.</text>
</comment>
<comment type="subcellular location">
    <subcellularLocation>
        <location evidence="1">Cytoplasm</location>
    </subcellularLocation>
</comment>
<comment type="similarity">
    <text evidence="1">Belongs to the EPSP synthase family. MurA subfamily.</text>
</comment>